<gene>
    <name type="primary">NAT6</name>
    <name type="ordered locus">At5g62890</name>
    <name type="ORF">MQB2.190</name>
    <name type="ORF">MQB2.21</name>
</gene>
<accession>Q27GI3</accession>
<accession>Q3E869</accession>
<accession>Q94CA7</accession>
<accession>Q9FM07</accession>
<keyword id="KW-0025">Alternative splicing</keyword>
<keyword id="KW-0472">Membrane</keyword>
<keyword id="KW-1185">Reference proteome</keyword>
<keyword id="KW-0812">Transmembrane</keyword>
<keyword id="KW-1133">Transmembrane helix</keyword>
<keyword id="KW-0813">Transport</keyword>
<proteinExistence type="evidence at transcript level"/>
<comment type="subcellular location">
    <subcellularLocation>
        <location evidence="5">Membrane</location>
        <topology evidence="5">Multi-pass membrane protein</topology>
    </subcellularLocation>
</comment>
<comment type="alternative products">
    <event type="alternative splicing"/>
    <isoform>
        <id>Q27GI3-1</id>
        <name>1</name>
        <sequence type="displayed"/>
    </isoform>
    <isoform>
        <id>Q27GI3-2</id>
        <name>2</name>
        <sequence type="described" ref="VSP_022175 VSP_022176"/>
    </isoform>
</comment>
<comment type="tissue specificity">
    <text evidence="3 4">Expressed in the apical region of cotyledons 4 days after imbibition (DAI). Expressed in the whole vasculature at 12 DAI. Expressed in the root central cylinder and lateral root primordia. Expressed in the vasculature of sepals, filaments, carpels and developing siliques.</text>
</comment>
<comment type="miscellaneous">
    <molecule>Isoform 2</molecule>
    <text evidence="5">May be due to intron retention.</text>
</comment>
<comment type="similarity">
    <text evidence="5">Belongs to the nucleobase:cation symporter-2 (NCS2) (TC 2.A.40) family.</text>
</comment>
<evidence type="ECO:0000255" key="1"/>
<evidence type="ECO:0000256" key="2">
    <source>
        <dbReference type="SAM" id="MobiDB-lite"/>
    </source>
</evidence>
<evidence type="ECO:0000269" key="3">
    <source>
    </source>
</evidence>
<evidence type="ECO:0000269" key="4">
    <source ref="1"/>
</evidence>
<evidence type="ECO:0000305" key="5"/>
<dbReference type="EMBL" id="AF466198">
    <property type="protein sequence ID" value="AAM47573.1"/>
    <property type="molecule type" value="mRNA"/>
</dbReference>
<dbReference type="EMBL" id="AB009053">
    <property type="protein sequence ID" value="BAB10858.1"/>
    <property type="molecule type" value="Genomic_DNA"/>
</dbReference>
<dbReference type="EMBL" id="CP002688">
    <property type="protein sequence ID" value="AED97668.1"/>
    <property type="molecule type" value="Genomic_DNA"/>
</dbReference>
<dbReference type="EMBL" id="CP002688">
    <property type="protein sequence ID" value="AED97669.1"/>
    <property type="molecule type" value="Genomic_DNA"/>
</dbReference>
<dbReference type="EMBL" id="CP002688">
    <property type="protein sequence ID" value="AED97670.1"/>
    <property type="molecule type" value="Genomic_DNA"/>
</dbReference>
<dbReference type="EMBL" id="CP002688">
    <property type="protein sequence ID" value="AED97671.1"/>
    <property type="molecule type" value="Genomic_DNA"/>
</dbReference>
<dbReference type="EMBL" id="AY035003">
    <property type="protein sequence ID" value="AAK59508.2"/>
    <property type="molecule type" value="mRNA"/>
</dbReference>
<dbReference type="RefSeq" id="NP_001032127.2">
    <molecule id="Q27GI3-1"/>
    <property type="nucleotide sequence ID" value="NM_001037050.2"/>
</dbReference>
<dbReference type="RefSeq" id="NP_001078782.1">
    <molecule id="Q27GI3-2"/>
    <property type="nucleotide sequence ID" value="NM_001085313.2"/>
</dbReference>
<dbReference type="RefSeq" id="NP_201094.1">
    <molecule id="Q27GI3-1"/>
    <property type="nucleotide sequence ID" value="NM_125683.4"/>
</dbReference>
<dbReference type="RefSeq" id="NP_851251.2">
    <molecule id="Q27GI3-1"/>
    <property type="nucleotide sequence ID" value="NM_180920.3"/>
</dbReference>
<dbReference type="SMR" id="Q27GI3"/>
<dbReference type="BioGRID" id="21652">
    <property type="interactions" value="1"/>
</dbReference>
<dbReference type="FunCoup" id="Q27GI3">
    <property type="interactions" value="1386"/>
</dbReference>
<dbReference type="IntAct" id="Q27GI3">
    <property type="interactions" value="1"/>
</dbReference>
<dbReference type="STRING" id="3702.Q27GI3"/>
<dbReference type="iPTMnet" id="Q27GI3"/>
<dbReference type="PaxDb" id="3702-AT5G62890.2"/>
<dbReference type="ProteomicsDB" id="251299">
    <molecule id="Q27GI3-1"/>
</dbReference>
<dbReference type="EnsemblPlants" id="AT5G62890.1">
    <molecule id="Q27GI3-1"/>
    <property type="protein sequence ID" value="AT5G62890.1"/>
    <property type="gene ID" value="AT5G62890"/>
</dbReference>
<dbReference type="EnsemblPlants" id="AT5G62890.2">
    <molecule id="Q27GI3-1"/>
    <property type="protein sequence ID" value="AT5G62890.2"/>
    <property type="gene ID" value="AT5G62890"/>
</dbReference>
<dbReference type="EnsemblPlants" id="AT5G62890.3">
    <molecule id="Q27GI3-1"/>
    <property type="protein sequence ID" value="AT5G62890.3"/>
    <property type="gene ID" value="AT5G62890"/>
</dbReference>
<dbReference type="EnsemblPlants" id="AT5G62890.4">
    <molecule id="Q27GI3-2"/>
    <property type="protein sequence ID" value="AT5G62890.4"/>
    <property type="gene ID" value="AT5G62890"/>
</dbReference>
<dbReference type="GeneID" id="836409"/>
<dbReference type="Gramene" id="AT5G62890.1">
    <molecule id="Q27GI3-1"/>
    <property type="protein sequence ID" value="AT5G62890.1"/>
    <property type="gene ID" value="AT5G62890"/>
</dbReference>
<dbReference type="Gramene" id="AT5G62890.2">
    <molecule id="Q27GI3-1"/>
    <property type="protein sequence ID" value="AT5G62890.2"/>
    <property type="gene ID" value="AT5G62890"/>
</dbReference>
<dbReference type="Gramene" id="AT5G62890.3">
    <molecule id="Q27GI3-1"/>
    <property type="protein sequence ID" value="AT5G62890.3"/>
    <property type="gene ID" value="AT5G62890"/>
</dbReference>
<dbReference type="Gramene" id="AT5G62890.4">
    <molecule id="Q27GI3-2"/>
    <property type="protein sequence ID" value="AT5G62890.4"/>
    <property type="gene ID" value="AT5G62890"/>
</dbReference>
<dbReference type="KEGG" id="ath:AT5G62890"/>
<dbReference type="Araport" id="AT5G62890"/>
<dbReference type="TAIR" id="AT5G62890"/>
<dbReference type="eggNOG" id="KOG1292">
    <property type="taxonomic scope" value="Eukaryota"/>
</dbReference>
<dbReference type="HOGENOM" id="CLU_017959_5_3_1"/>
<dbReference type="InParanoid" id="Q27GI3"/>
<dbReference type="OMA" id="RAGWCAS"/>
<dbReference type="OrthoDB" id="1043566at2759"/>
<dbReference type="PhylomeDB" id="Q27GI3"/>
<dbReference type="PRO" id="PR:Q27GI3"/>
<dbReference type="Proteomes" id="UP000006548">
    <property type="component" value="Chromosome 5"/>
</dbReference>
<dbReference type="ExpressionAtlas" id="Q27GI3">
    <property type="expression patterns" value="baseline and differential"/>
</dbReference>
<dbReference type="GO" id="GO:0005783">
    <property type="term" value="C:endoplasmic reticulum"/>
    <property type="evidence" value="ECO:0007005"/>
    <property type="project" value="TAIR"/>
</dbReference>
<dbReference type="GO" id="GO:0016020">
    <property type="term" value="C:membrane"/>
    <property type="evidence" value="ECO:0007669"/>
    <property type="project" value="UniProtKB-SubCell"/>
</dbReference>
<dbReference type="GO" id="GO:0009505">
    <property type="term" value="C:plant-type cell wall"/>
    <property type="evidence" value="ECO:0007005"/>
    <property type="project" value="TAIR"/>
</dbReference>
<dbReference type="GO" id="GO:0009506">
    <property type="term" value="C:plasmodesma"/>
    <property type="evidence" value="ECO:0007005"/>
    <property type="project" value="TAIR"/>
</dbReference>
<dbReference type="GO" id="GO:0005773">
    <property type="term" value="C:vacuole"/>
    <property type="evidence" value="ECO:0007005"/>
    <property type="project" value="TAIR"/>
</dbReference>
<dbReference type="GO" id="GO:0022857">
    <property type="term" value="F:transmembrane transporter activity"/>
    <property type="evidence" value="ECO:0007669"/>
    <property type="project" value="InterPro"/>
</dbReference>
<dbReference type="InterPro" id="IPR006043">
    <property type="entry name" value="NCS2"/>
</dbReference>
<dbReference type="NCBIfam" id="NF037981">
    <property type="entry name" value="NCS2_1"/>
    <property type="match status" value="1"/>
</dbReference>
<dbReference type="PANTHER" id="PTHR11119">
    <property type="entry name" value="XANTHINE-URACIL / VITAMIN C PERMEASE FAMILY MEMBER"/>
    <property type="match status" value="1"/>
</dbReference>
<dbReference type="Pfam" id="PF00860">
    <property type="entry name" value="Xan_ur_permease"/>
    <property type="match status" value="1"/>
</dbReference>
<protein>
    <recommendedName>
        <fullName>Nucleobase-ascorbate transporter 6</fullName>
        <shortName>AtNAT6</shortName>
    </recommendedName>
</protein>
<reference key="1">
    <citation type="journal article" date="2002" name="Plant Sci.">
        <title>Arabidopsis thaliana locus At5g62890, a nucleobase-ascorbate transporter family member, is preferentially expressed in carpel transmitting tract and tapetal cells.</title>
        <authorList>
            <person name="Li Q."/>
            <person name="Schultes N.P."/>
        </authorList>
    </citation>
    <scope>NUCLEOTIDE SEQUENCE [MRNA] (ISOFORM 1)</scope>
    <scope>TISSUE SPECIFICITY</scope>
    <source>
        <strain>cv. Columbia</strain>
    </source>
</reference>
<reference key="2">
    <citation type="journal article" date="1998" name="DNA Res.">
        <title>Structural analysis of Arabidopsis thaliana chromosome 5. IV. Sequence features of the regions of 1,456,315 bp covered by nineteen physically assigned P1 and TAC clones.</title>
        <authorList>
            <person name="Sato S."/>
            <person name="Kaneko T."/>
            <person name="Kotani H."/>
            <person name="Nakamura Y."/>
            <person name="Asamizu E."/>
            <person name="Miyajima N."/>
            <person name="Tabata S."/>
        </authorList>
    </citation>
    <scope>NUCLEOTIDE SEQUENCE [LARGE SCALE GENOMIC DNA]</scope>
    <source>
        <strain>cv. Columbia</strain>
    </source>
</reference>
<reference key="3">
    <citation type="journal article" date="2017" name="Plant J.">
        <title>Araport11: a complete reannotation of the Arabidopsis thaliana reference genome.</title>
        <authorList>
            <person name="Cheng C.Y."/>
            <person name="Krishnakumar V."/>
            <person name="Chan A.P."/>
            <person name="Thibaud-Nissen F."/>
            <person name="Schobel S."/>
            <person name="Town C.D."/>
        </authorList>
    </citation>
    <scope>GENOME REANNOTATION</scope>
    <source>
        <strain>cv. Columbia</strain>
    </source>
</reference>
<reference key="4">
    <citation type="journal article" date="2003" name="Science">
        <title>Empirical analysis of transcriptional activity in the Arabidopsis genome.</title>
        <authorList>
            <person name="Yamada K."/>
            <person name="Lim J."/>
            <person name="Dale J.M."/>
            <person name="Chen H."/>
            <person name="Shinn P."/>
            <person name="Palm C.J."/>
            <person name="Southwick A.M."/>
            <person name="Wu H.C."/>
            <person name="Kim C.J."/>
            <person name="Nguyen M."/>
            <person name="Pham P.K."/>
            <person name="Cheuk R.F."/>
            <person name="Karlin-Newmann G."/>
            <person name="Liu S.X."/>
            <person name="Lam B."/>
            <person name="Sakano H."/>
            <person name="Wu T."/>
            <person name="Yu G."/>
            <person name="Miranda M."/>
            <person name="Quach H.L."/>
            <person name="Tripp M."/>
            <person name="Chang C.H."/>
            <person name="Lee J.M."/>
            <person name="Toriumi M.J."/>
            <person name="Chan M.M."/>
            <person name="Tang C.C."/>
            <person name="Onodera C.S."/>
            <person name="Deng J.M."/>
            <person name="Akiyama K."/>
            <person name="Ansari Y."/>
            <person name="Arakawa T."/>
            <person name="Banh J."/>
            <person name="Banno F."/>
            <person name="Bowser L."/>
            <person name="Brooks S.Y."/>
            <person name="Carninci P."/>
            <person name="Chao Q."/>
            <person name="Choy N."/>
            <person name="Enju A."/>
            <person name="Goldsmith A.D."/>
            <person name="Gurjal M."/>
            <person name="Hansen N.F."/>
            <person name="Hayashizaki Y."/>
            <person name="Johnson-Hopson C."/>
            <person name="Hsuan V.W."/>
            <person name="Iida K."/>
            <person name="Karnes M."/>
            <person name="Khan S."/>
            <person name="Koesema E."/>
            <person name="Ishida J."/>
            <person name="Jiang P.X."/>
            <person name="Jones T."/>
            <person name="Kawai J."/>
            <person name="Kamiya A."/>
            <person name="Meyers C."/>
            <person name="Nakajima M."/>
            <person name="Narusaka M."/>
            <person name="Seki M."/>
            <person name="Sakurai T."/>
            <person name="Satou M."/>
            <person name="Tamse R."/>
            <person name="Vaysberg M."/>
            <person name="Wallender E.K."/>
            <person name="Wong C."/>
            <person name="Yamamura Y."/>
            <person name="Yuan S."/>
            <person name="Shinozaki K."/>
            <person name="Davis R.W."/>
            <person name="Theologis A."/>
            <person name="Ecker J.R."/>
        </authorList>
    </citation>
    <scope>NUCLEOTIDE SEQUENCE [LARGE SCALE MRNA] OF 173-532 (ISOFORM 1)</scope>
    <source>
        <strain>cv. Columbia</strain>
    </source>
</reference>
<reference key="5">
    <citation type="journal article" date="2006" name="Plant Cell Physiol.">
        <title>Identification and expression analysis of twelve members of the nucleobase-ascorbate transporter (NAT) gene family in Arabidopsis thaliana.</title>
        <authorList>
            <person name="Maurino V.G."/>
            <person name="Grube E."/>
            <person name="Zielinski J."/>
            <person name="Schild A."/>
            <person name="Fischer K."/>
            <person name="Flugge U.-I."/>
        </authorList>
    </citation>
    <scope>GENE FAMILY</scope>
    <scope>TISSUE SPECIFICITY</scope>
</reference>
<name>NAT6_ARATH</name>
<sequence>MAGGGAPAPKADEPQPHPPKDQLPNISYCITSPPPWPEAILLGFQHYLVMLGTTVLIPTALVPQMGGGYEEKAKVIQTILFVAGINTLLQTLFGTRLPAVVGASYTFVPTTISIILSGRFSDTSNPIDRFERIMRATQGALIVASTLQMILGFSGLWRNVVRFLSPISAVPLVGLVGFGLYEFGFPGVAKCIEIGLPELLILVFVSQYLPHVIKSGKNVFDRFAVIFAVVIVWIYAHLLTVGGAYNGAAPTTQTSCRTDRAGIIGAAPWIRVPWPFQWGAPSFDAGEAFAMMMASFVALVESTGAFVAVSRYASATMLPPSILSRGIGWQGVAILISGLFGTGAGSSVSVENAGLLALTRVGSRRVVQIAAGFMIFFSILGKFGAVFASIPAPIIAALYCLFFAYVGAGGLSFLQFCNLNSFRTKFILGFSVFLGLSIPQYFNEYTAIKGYGPVHTGARWFNDMVNVPFSSEPFVAGSVAFFLDNTLHKKDSSIRKDRGKHWWDKFRSFKGDTRSEEFYSLPFNLNKYFPSV</sequence>
<feature type="chain" id="PRO_0000270163" description="Nucleobase-ascorbate transporter 6">
    <location>
        <begin position="1"/>
        <end position="532"/>
    </location>
</feature>
<feature type="transmembrane region" description="Helical" evidence="1">
    <location>
        <begin position="39"/>
        <end position="59"/>
    </location>
</feature>
<feature type="transmembrane region" description="Helical" evidence="1">
    <location>
        <begin position="75"/>
        <end position="95"/>
    </location>
</feature>
<feature type="transmembrane region" description="Helical" evidence="1">
    <location>
        <begin position="97"/>
        <end position="117"/>
    </location>
</feature>
<feature type="transmembrane region" description="Helical" evidence="1">
    <location>
        <begin position="137"/>
        <end position="157"/>
    </location>
</feature>
<feature type="transmembrane region" description="Helical" evidence="1">
    <location>
        <begin position="163"/>
        <end position="185"/>
    </location>
</feature>
<feature type="transmembrane region" description="Helical" evidence="1">
    <location>
        <begin position="192"/>
        <end position="212"/>
    </location>
</feature>
<feature type="transmembrane region" description="Helical" evidence="1">
    <location>
        <begin position="223"/>
        <end position="243"/>
    </location>
</feature>
<feature type="transmembrane region" description="Helical" evidence="1">
    <location>
        <begin position="289"/>
        <end position="309"/>
    </location>
</feature>
<feature type="transmembrane region" description="Helical" evidence="1">
    <location>
        <begin position="361"/>
        <end position="381"/>
    </location>
</feature>
<feature type="transmembrane region" description="Helical" evidence="1">
    <location>
        <begin position="392"/>
        <end position="414"/>
    </location>
</feature>
<feature type="transmembrane region" description="Helical" evidence="1">
    <location>
        <begin position="426"/>
        <end position="446"/>
    </location>
</feature>
<feature type="transmembrane region" description="Helical" evidence="1">
    <location>
        <begin position="463"/>
        <end position="483"/>
    </location>
</feature>
<feature type="region of interest" description="Disordered" evidence="2">
    <location>
        <begin position="1"/>
        <end position="24"/>
    </location>
</feature>
<feature type="compositionally biased region" description="Basic and acidic residues" evidence="2">
    <location>
        <begin position="10"/>
        <end position="20"/>
    </location>
</feature>
<feature type="splice variant" id="VSP_022175" description="In isoform 2." evidence="5">
    <original>FNDMVNVPFSSEPFVA</original>
    <variation>VCRTKSLLFLLLFPLK</variation>
    <location>
        <begin position="461"/>
        <end position="476"/>
    </location>
</feature>
<feature type="splice variant" id="VSP_022176" description="In isoform 2." evidence="5">
    <location>
        <begin position="477"/>
        <end position="532"/>
    </location>
</feature>
<organism>
    <name type="scientific">Arabidopsis thaliana</name>
    <name type="common">Mouse-ear cress</name>
    <dbReference type="NCBI Taxonomy" id="3702"/>
    <lineage>
        <taxon>Eukaryota</taxon>
        <taxon>Viridiplantae</taxon>
        <taxon>Streptophyta</taxon>
        <taxon>Embryophyta</taxon>
        <taxon>Tracheophyta</taxon>
        <taxon>Spermatophyta</taxon>
        <taxon>Magnoliopsida</taxon>
        <taxon>eudicotyledons</taxon>
        <taxon>Gunneridae</taxon>
        <taxon>Pentapetalae</taxon>
        <taxon>rosids</taxon>
        <taxon>malvids</taxon>
        <taxon>Brassicales</taxon>
        <taxon>Brassicaceae</taxon>
        <taxon>Camelineae</taxon>
        <taxon>Arabidopsis</taxon>
    </lineage>
</organism>